<gene>
    <name type="primary">ag5</name>
</gene>
<keyword id="KW-0963">Cytoplasm</keyword>
<keyword id="KW-0456">Lyase</keyword>
<keyword id="KW-0460">Magnesium</keyword>
<keyword id="KW-0479">Metal-binding</keyword>
<protein>
    <recommendedName>
        <fullName>Gamma-humulene synthase</fullName>
        <ecNumber>4.2.3.56</ecNumber>
    </recommendedName>
    <alternativeName>
        <fullName>Agfghum</fullName>
    </alternativeName>
</protein>
<proteinExistence type="evidence at protein level"/>
<accession>O64405</accession>
<organism>
    <name type="scientific">Abies grandis</name>
    <name type="common">Grand fir</name>
    <name type="synonym">Pinus grandis</name>
    <dbReference type="NCBI Taxonomy" id="46611"/>
    <lineage>
        <taxon>Eukaryota</taxon>
        <taxon>Viridiplantae</taxon>
        <taxon>Streptophyta</taxon>
        <taxon>Embryophyta</taxon>
        <taxon>Tracheophyta</taxon>
        <taxon>Spermatophyta</taxon>
        <taxon>Pinopsida</taxon>
        <taxon>Pinidae</taxon>
        <taxon>Conifers I</taxon>
        <taxon>Pinales</taxon>
        <taxon>Pinaceae</taxon>
        <taxon>Abies</taxon>
    </lineage>
</organism>
<comment type="function">
    <text evidence="3 4 5">Involved in defensive oleoresin formation in conifers in response to insect attack or other injury. Involved in 52 sesquiterpene (C15) olefins biosynthesis.</text>
</comment>
<comment type="catalytic activity">
    <reaction evidence="4">
        <text>(2E,6E)-farnesyl diphosphate = gamma-humulene + diphosphate</text>
        <dbReference type="Rhea" id="RHEA:25456"/>
        <dbReference type="ChEBI" id="CHEBI:33019"/>
        <dbReference type="ChEBI" id="CHEBI:49290"/>
        <dbReference type="ChEBI" id="CHEBI:175763"/>
        <dbReference type="EC" id="4.2.3.56"/>
    </reaction>
</comment>
<comment type="catalytic activity">
    <reaction evidence="4">
        <text>(2E,6E)-farnesyl diphosphate = sibirene + diphosphate</text>
        <dbReference type="Rhea" id="RHEA:25460"/>
        <dbReference type="ChEBI" id="CHEBI:33019"/>
        <dbReference type="ChEBI" id="CHEBI:49231"/>
        <dbReference type="ChEBI" id="CHEBI:175763"/>
        <dbReference type="EC" id="4.2.3.56"/>
    </reaction>
</comment>
<comment type="catalytic activity">
    <reaction evidence="4">
        <text>(2E,6E)-farnesyl diphosphate = longifolene + diphosphate</text>
        <dbReference type="Rhea" id="RHEA:25464"/>
        <dbReference type="ChEBI" id="CHEBI:6530"/>
        <dbReference type="ChEBI" id="CHEBI:33019"/>
        <dbReference type="ChEBI" id="CHEBI:175763"/>
        <dbReference type="EC" id="4.2.3.56"/>
    </reaction>
</comment>
<comment type="catalytic activity">
    <reaction evidence="4">
        <text>(2E,6E)-farnesyl diphosphate = beta-himachalene + diphosphate</text>
        <dbReference type="Rhea" id="RHEA:25468"/>
        <dbReference type="ChEBI" id="CHEBI:33019"/>
        <dbReference type="ChEBI" id="CHEBI:49210"/>
        <dbReference type="ChEBI" id="CHEBI:175763"/>
        <dbReference type="EC" id="4.2.3.56"/>
    </reaction>
</comment>
<comment type="catalytic activity">
    <reaction evidence="4">
        <text>(2E,6E)-farnesyl diphosphate = gamma-himachalene + diphosphate</text>
        <dbReference type="Rhea" id="RHEA:25472"/>
        <dbReference type="ChEBI" id="CHEBI:33019"/>
        <dbReference type="ChEBI" id="CHEBI:49224"/>
        <dbReference type="ChEBI" id="CHEBI:175763"/>
        <dbReference type="EC" id="4.2.3.56"/>
    </reaction>
</comment>
<comment type="catalytic activity">
    <reaction evidence="4">
        <text>(2E,6E)-farnesyl diphosphate = alpha-himachalene + diphosphate</text>
        <dbReference type="Rhea" id="RHEA:25476"/>
        <dbReference type="ChEBI" id="CHEBI:33019"/>
        <dbReference type="ChEBI" id="CHEBI:49214"/>
        <dbReference type="ChEBI" id="CHEBI:175763"/>
        <dbReference type="EC" id="4.2.3.56"/>
    </reaction>
</comment>
<comment type="cofactor">
    <cofactor evidence="1">
        <name>Mg(2+)</name>
        <dbReference type="ChEBI" id="CHEBI:18420"/>
    </cofactor>
    <text evidence="1">Binds 3 Mg(2+) ions per subunit.</text>
</comment>
<comment type="cofactor">
    <cofactor>
        <name>K(+)</name>
        <dbReference type="ChEBI" id="CHEBI:29103"/>
    </cofactor>
</comment>
<comment type="biophysicochemical properties">
    <kinetics>
        <KM evidence="4">4.5 uM for farnesyl diphosphate</KM>
    </kinetics>
</comment>
<comment type="pathway">
    <text>Terpene metabolism; oleoresin biosynthesis.</text>
</comment>
<comment type="subcellular location">
    <subcellularLocation>
        <location evidence="6">Cytoplasm</location>
    </subcellularLocation>
</comment>
<comment type="induction">
    <text>Constitutive expression.</text>
</comment>
<comment type="domain">
    <text>The Asp-Asp-Xaa-Xaa-Asp/Glu (DDXXD/E) motif is important for the catalytic activity, presumably through binding to Mg(2+).</text>
</comment>
<comment type="miscellaneous">
    <text>In sesquiterpene synthases utilizing farnesyl diphosphate as substrate, magnesium is more efficient as cofactor than is manganese.</text>
</comment>
<comment type="similarity">
    <text evidence="6">Belongs to the terpene synthase family. Tpsd subfamily.</text>
</comment>
<name>TPSD5_ABIGR</name>
<feature type="chain" id="PRO_0000186448" description="Gamma-humulene synthase">
    <location>
        <begin position="1"/>
        <end position="593"/>
    </location>
</feature>
<feature type="region of interest" description="Disordered" evidence="2">
    <location>
        <begin position="1"/>
        <end position="34"/>
    </location>
</feature>
<feature type="short sequence motif" description="DDXXD motif">
    <location>
        <begin position="343"/>
        <end position="347"/>
    </location>
</feature>
<feature type="compositionally biased region" description="Polar residues" evidence="2">
    <location>
        <begin position="1"/>
        <end position="26"/>
    </location>
</feature>
<feature type="binding site" evidence="1">
    <location>
        <position position="343"/>
    </location>
    <ligand>
        <name>Mg(2+)</name>
        <dbReference type="ChEBI" id="CHEBI:18420"/>
        <label>1</label>
    </ligand>
</feature>
<feature type="binding site" evidence="1">
    <location>
        <position position="343"/>
    </location>
    <ligand>
        <name>Mg(2+)</name>
        <dbReference type="ChEBI" id="CHEBI:18420"/>
        <label>2</label>
    </ligand>
</feature>
<feature type="binding site" evidence="1">
    <location>
        <position position="347"/>
    </location>
    <ligand>
        <name>Mg(2+)</name>
        <dbReference type="ChEBI" id="CHEBI:18420"/>
        <label>1</label>
    </ligand>
</feature>
<feature type="binding site" evidence="1">
    <location>
        <position position="347"/>
    </location>
    <ligand>
        <name>Mg(2+)</name>
        <dbReference type="ChEBI" id="CHEBI:18420"/>
        <label>2</label>
    </ligand>
</feature>
<feature type="binding site" evidence="1">
    <location>
        <position position="488"/>
    </location>
    <ligand>
        <name>Mg(2+)</name>
        <dbReference type="ChEBI" id="CHEBI:18420"/>
        <label>3</label>
    </ligand>
</feature>
<feature type="binding site" evidence="1">
    <location>
        <position position="496"/>
    </location>
    <ligand>
        <name>Mg(2+)</name>
        <dbReference type="ChEBI" id="CHEBI:18420"/>
        <label>3</label>
    </ligand>
</feature>
<evidence type="ECO:0000250" key="1"/>
<evidence type="ECO:0000256" key="2">
    <source>
        <dbReference type="SAM" id="MobiDB-lite"/>
    </source>
</evidence>
<evidence type="ECO:0000269" key="3">
    <source>
    </source>
</evidence>
<evidence type="ECO:0000269" key="4">
    <source>
    </source>
</evidence>
<evidence type="ECO:0000269" key="5">
    <source>
    </source>
</evidence>
<evidence type="ECO:0000305" key="6"/>
<reference key="1">
    <citation type="journal article" date="1998" name="J. Biol. Chem.">
        <title>Sesquiterpene synthases from grand fir (Abies grandis). Comparison of constitutive and wound-induced activities, and cDNA isolation, characterization, and bacterial expression of delta-selinene synthase and gamma-humulene synthase.</title>
        <authorList>
            <person name="Steele C.L."/>
            <person name="Crock J."/>
            <person name="Bohlmann J."/>
            <person name="Croteau R.B."/>
        </authorList>
    </citation>
    <scope>NUCLEOTIDE SEQUENCE [MRNA]</scope>
    <scope>FUNCTION</scope>
    <scope>CATALYTIC ACTIVITY</scope>
    <scope>BIOPHYSICOCHEMICAL PROPERTIES</scope>
</reference>
<reference key="2">
    <citation type="journal article" date="1998" name="Proc. Natl. Acad. Sci. U.S.A.">
        <title>Plant terpenoid synthases: molecular biology and phylogenetic analysis.</title>
        <authorList>
            <person name="Bohlmann J."/>
            <person name="Meyer-Gauen G."/>
            <person name="Croteau R.B."/>
        </authorList>
    </citation>
    <scope>GENE FAMILY</scope>
    <scope>NOMENCLATURE</scope>
    <scope>FUNCTION</scope>
</reference>
<reference key="3">
    <citation type="journal article" date="2001" name="Genetics">
        <title>Genomic organization of plant terpene synthases and molecular evolutionary implications.</title>
        <authorList>
            <person name="Trapp S.C."/>
            <person name="Croteau R.B."/>
        </authorList>
    </citation>
    <scope>GENE FAMILY</scope>
    <scope>NOMENCLATURE</scope>
    <scope>FUNCTION</scope>
</reference>
<sequence>MAQISESVSPSTDLKSTESSITSNRHGNMWEDDRIQSLNSPYGAPAYQERSEKLIEEIKLLFLSDMDDSCNDSDRDLIKRLEIVDTVECLGIDRHFQPEIKLALDYVYRCWNERGIGEGSRDSLKKDLNATALGFRALRLHRYNVSSGVLENFRDDNGQFFCGSTVEEEGAEAYNKHVRCMLSLSRASNILFPGEKVMEEAKAFTTNYLKKVLAGREATHVDESLLGEVKYALEFPWHCSVQRWEARSFIEIFGQIDSELKSNLSKKMLELAKLDFNILQCTHQKELQIISRWFADSSIASLNFYRKCYVEFYFWMAAAISEPEFSGSRVAFTKIAILMTMLDDLYDTHGTLDQLKIFTEGVRRWDVSLVEGLPDFMKIAFEFWLKTSNELIAEAVKAQGQDMAAYIRKNAWERYLEAYLQDAEWIATGHVPTFDEYLNNGTPNTGMCVLNLIPLLLMGEHLPIDILEQIFLPSRFHHLIELASRLVDDARDFQAEKDHGDLSCIECYLKDHPESTVEDALNHVNGLLGNCLLEMNWKFLKKQDSVPLSCKKYSFHVLARSIQFMYNQGDGFSISNKVIKDQVQKVLIVPVPI</sequence>
<dbReference type="EC" id="4.2.3.56"/>
<dbReference type="EMBL" id="U92267">
    <property type="protein sequence ID" value="AAC05728.1"/>
    <property type="molecule type" value="mRNA"/>
</dbReference>
<dbReference type="SMR" id="O64405"/>
<dbReference type="KEGG" id="ag:AAC05728"/>
<dbReference type="BioCyc" id="MetaCyc:AG5-MONOMER"/>
<dbReference type="BRENDA" id="4.2.3.56">
    <property type="organism ID" value="2"/>
</dbReference>
<dbReference type="SABIO-RK" id="O64405"/>
<dbReference type="UniPathway" id="UPA00924"/>
<dbReference type="GO" id="GO:0005737">
    <property type="term" value="C:cytoplasm"/>
    <property type="evidence" value="ECO:0007669"/>
    <property type="project" value="UniProtKB-SubCell"/>
</dbReference>
<dbReference type="GO" id="GO:0000287">
    <property type="term" value="F:magnesium ion binding"/>
    <property type="evidence" value="ECO:0007669"/>
    <property type="project" value="InterPro"/>
</dbReference>
<dbReference type="GO" id="GO:0010333">
    <property type="term" value="F:terpene synthase activity"/>
    <property type="evidence" value="ECO:0007669"/>
    <property type="project" value="InterPro"/>
</dbReference>
<dbReference type="GO" id="GO:0016102">
    <property type="term" value="P:diterpenoid biosynthetic process"/>
    <property type="evidence" value="ECO:0007669"/>
    <property type="project" value="InterPro"/>
</dbReference>
<dbReference type="CDD" id="cd00684">
    <property type="entry name" value="Terpene_cyclase_plant_C1"/>
    <property type="match status" value="1"/>
</dbReference>
<dbReference type="FunFam" id="1.10.600.10:FF:000005">
    <property type="entry name" value="Ent-kaur-16-ene synthase, chloroplastic"/>
    <property type="match status" value="1"/>
</dbReference>
<dbReference type="Gene3D" id="1.10.600.10">
    <property type="entry name" value="Farnesyl Diphosphate Synthase"/>
    <property type="match status" value="1"/>
</dbReference>
<dbReference type="Gene3D" id="1.50.10.130">
    <property type="entry name" value="Terpene synthase, N-terminal domain"/>
    <property type="match status" value="1"/>
</dbReference>
<dbReference type="InterPro" id="IPR008949">
    <property type="entry name" value="Isoprenoid_synthase_dom_sf"/>
</dbReference>
<dbReference type="InterPro" id="IPR034741">
    <property type="entry name" value="Terpene_cyclase-like_1_C"/>
</dbReference>
<dbReference type="InterPro" id="IPR044814">
    <property type="entry name" value="Terpene_cyclase_plant_C1"/>
</dbReference>
<dbReference type="InterPro" id="IPR001906">
    <property type="entry name" value="Terpene_synth_N"/>
</dbReference>
<dbReference type="InterPro" id="IPR036965">
    <property type="entry name" value="Terpene_synth_N_sf"/>
</dbReference>
<dbReference type="InterPro" id="IPR050148">
    <property type="entry name" value="Terpene_synthase-like"/>
</dbReference>
<dbReference type="InterPro" id="IPR005630">
    <property type="entry name" value="Terpene_synthase_metal-bd"/>
</dbReference>
<dbReference type="InterPro" id="IPR008930">
    <property type="entry name" value="Terpenoid_cyclase/PrenylTrfase"/>
</dbReference>
<dbReference type="PANTHER" id="PTHR31739:SF25">
    <property type="entry name" value="(E,E)-GERANYLLINALOOL SYNTHASE"/>
    <property type="match status" value="1"/>
</dbReference>
<dbReference type="PANTHER" id="PTHR31739">
    <property type="entry name" value="ENT-COPALYL DIPHOSPHATE SYNTHASE, CHLOROPLASTIC"/>
    <property type="match status" value="1"/>
</dbReference>
<dbReference type="Pfam" id="PF01397">
    <property type="entry name" value="Terpene_synth"/>
    <property type="match status" value="1"/>
</dbReference>
<dbReference type="Pfam" id="PF03936">
    <property type="entry name" value="Terpene_synth_C"/>
    <property type="match status" value="1"/>
</dbReference>
<dbReference type="SFLD" id="SFLDS00005">
    <property type="entry name" value="Isoprenoid_Synthase_Type_I"/>
    <property type="match status" value="1"/>
</dbReference>
<dbReference type="SFLD" id="SFLDG01019">
    <property type="entry name" value="Terpene_Cyclase_Like_1_C_Termi"/>
    <property type="match status" value="1"/>
</dbReference>
<dbReference type="SFLD" id="SFLDG01014">
    <property type="entry name" value="Terpene_Cyclase_Like_1_N-term"/>
    <property type="match status" value="1"/>
</dbReference>
<dbReference type="SUPFAM" id="SSF48239">
    <property type="entry name" value="Terpenoid cyclases/Protein prenyltransferases"/>
    <property type="match status" value="1"/>
</dbReference>
<dbReference type="SUPFAM" id="SSF48576">
    <property type="entry name" value="Terpenoid synthases"/>
    <property type="match status" value="1"/>
</dbReference>